<sequence>MMEFNERPFHFIGIGGIGMSALAYILAKKGLRVSGSDLRPNRLTEQLAELGVQIFIGQSAANLERYPFTPLPQVICSSAIRSDNPEYLAAQHLGCPIFHRSDVLAALMHRSQSIAVAGTHGKTTTSSMIAYLLLQAGLDPTIIVGGEVAAWQGNARVGQSRYLVAEADESDGSLRKFHPHIGVITNIELDHPDHYNSLEEVVATFQQFADQAEIVIACADCPNIRDRLHHPRLLTYSLQRQAAVDYCVDHIQYTAEGTTARVWERGTSLGILQLNVLGAHNLQNALAVIAVGRYLGIDFATIAAALLEFRGARRRFEERGQVNGIRFIDDYAHHPSEIMATLEAARLQVGTQTPWQRIVAVFQPHRYSRTQTLLKAFGQCFTAADHVIFTDIYSAGEPDPGTISGADVATCARQYHASVDYCPTLEAVQTRLAHLLQPGDLVIFLGAGNLNQLIPSVMADQEQFSVSSLTEAIAL</sequence>
<evidence type="ECO:0000255" key="1">
    <source>
        <dbReference type="HAMAP-Rule" id="MF_00046"/>
    </source>
</evidence>
<reference key="1">
    <citation type="journal article" date="2002" name="DNA Res.">
        <title>Complete genome structure of the thermophilic cyanobacterium Thermosynechococcus elongatus BP-1.</title>
        <authorList>
            <person name="Nakamura Y."/>
            <person name="Kaneko T."/>
            <person name="Sato S."/>
            <person name="Ikeuchi M."/>
            <person name="Katoh H."/>
            <person name="Sasamoto S."/>
            <person name="Watanabe A."/>
            <person name="Iriguchi M."/>
            <person name="Kawashima K."/>
            <person name="Kimura T."/>
            <person name="Kishida Y."/>
            <person name="Kiyokawa C."/>
            <person name="Kohara M."/>
            <person name="Matsumoto M."/>
            <person name="Matsuno A."/>
            <person name="Nakazaki N."/>
            <person name="Shimpo S."/>
            <person name="Sugimoto M."/>
            <person name="Takeuchi C."/>
            <person name="Yamada M."/>
            <person name="Tabata S."/>
        </authorList>
    </citation>
    <scope>NUCLEOTIDE SEQUENCE [LARGE SCALE GENOMIC DNA]</scope>
    <source>
        <strain>NIES-2133 / IAM M-273 / BP-1</strain>
    </source>
</reference>
<dbReference type="EC" id="6.3.2.8" evidence="1"/>
<dbReference type="EMBL" id="BA000039">
    <property type="protein sequence ID" value="BAC07923.1"/>
    <property type="molecule type" value="Genomic_DNA"/>
</dbReference>
<dbReference type="RefSeq" id="NP_681161.1">
    <property type="nucleotide sequence ID" value="NC_004113.1"/>
</dbReference>
<dbReference type="SMR" id="Q8DLV5"/>
<dbReference type="STRING" id="197221.gene:10746957"/>
<dbReference type="EnsemblBacteria" id="BAC07923">
    <property type="protein sequence ID" value="BAC07923"/>
    <property type="gene ID" value="BAC07923"/>
</dbReference>
<dbReference type="KEGG" id="tel:tll0371"/>
<dbReference type="PATRIC" id="fig|197221.4.peg.390"/>
<dbReference type="eggNOG" id="COG0773">
    <property type="taxonomic scope" value="Bacteria"/>
</dbReference>
<dbReference type="UniPathway" id="UPA00219"/>
<dbReference type="Proteomes" id="UP000000440">
    <property type="component" value="Chromosome"/>
</dbReference>
<dbReference type="GO" id="GO:0005737">
    <property type="term" value="C:cytoplasm"/>
    <property type="evidence" value="ECO:0007669"/>
    <property type="project" value="UniProtKB-SubCell"/>
</dbReference>
<dbReference type="GO" id="GO:0005524">
    <property type="term" value="F:ATP binding"/>
    <property type="evidence" value="ECO:0007669"/>
    <property type="project" value="UniProtKB-UniRule"/>
</dbReference>
<dbReference type="GO" id="GO:0008763">
    <property type="term" value="F:UDP-N-acetylmuramate-L-alanine ligase activity"/>
    <property type="evidence" value="ECO:0007669"/>
    <property type="project" value="UniProtKB-UniRule"/>
</dbReference>
<dbReference type="GO" id="GO:0051301">
    <property type="term" value="P:cell division"/>
    <property type="evidence" value="ECO:0007669"/>
    <property type="project" value="UniProtKB-KW"/>
</dbReference>
<dbReference type="GO" id="GO:0071555">
    <property type="term" value="P:cell wall organization"/>
    <property type="evidence" value="ECO:0007669"/>
    <property type="project" value="UniProtKB-KW"/>
</dbReference>
<dbReference type="GO" id="GO:0009252">
    <property type="term" value="P:peptidoglycan biosynthetic process"/>
    <property type="evidence" value="ECO:0007669"/>
    <property type="project" value="UniProtKB-UniRule"/>
</dbReference>
<dbReference type="GO" id="GO:0008360">
    <property type="term" value="P:regulation of cell shape"/>
    <property type="evidence" value="ECO:0007669"/>
    <property type="project" value="UniProtKB-KW"/>
</dbReference>
<dbReference type="Gene3D" id="3.90.190.20">
    <property type="entry name" value="Mur ligase, C-terminal domain"/>
    <property type="match status" value="1"/>
</dbReference>
<dbReference type="Gene3D" id="3.40.1190.10">
    <property type="entry name" value="Mur-like, catalytic domain"/>
    <property type="match status" value="1"/>
</dbReference>
<dbReference type="Gene3D" id="3.40.50.720">
    <property type="entry name" value="NAD(P)-binding Rossmann-like Domain"/>
    <property type="match status" value="1"/>
</dbReference>
<dbReference type="HAMAP" id="MF_00046">
    <property type="entry name" value="MurC"/>
    <property type="match status" value="1"/>
</dbReference>
<dbReference type="InterPro" id="IPR036565">
    <property type="entry name" value="Mur-like_cat_sf"/>
</dbReference>
<dbReference type="InterPro" id="IPR004101">
    <property type="entry name" value="Mur_ligase_C"/>
</dbReference>
<dbReference type="InterPro" id="IPR036615">
    <property type="entry name" value="Mur_ligase_C_dom_sf"/>
</dbReference>
<dbReference type="InterPro" id="IPR013221">
    <property type="entry name" value="Mur_ligase_cen"/>
</dbReference>
<dbReference type="InterPro" id="IPR000713">
    <property type="entry name" value="Mur_ligase_N"/>
</dbReference>
<dbReference type="InterPro" id="IPR050061">
    <property type="entry name" value="MurCDEF_pg_biosynth"/>
</dbReference>
<dbReference type="InterPro" id="IPR005758">
    <property type="entry name" value="UDP-N-AcMur_Ala_ligase_MurC"/>
</dbReference>
<dbReference type="NCBIfam" id="TIGR01082">
    <property type="entry name" value="murC"/>
    <property type="match status" value="1"/>
</dbReference>
<dbReference type="PANTHER" id="PTHR43445:SF3">
    <property type="entry name" value="UDP-N-ACETYLMURAMATE--L-ALANINE LIGASE"/>
    <property type="match status" value="1"/>
</dbReference>
<dbReference type="PANTHER" id="PTHR43445">
    <property type="entry name" value="UDP-N-ACETYLMURAMATE--L-ALANINE LIGASE-RELATED"/>
    <property type="match status" value="1"/>
</dbReference>
<dbReference type="Pfam" id="PF01225">
    <property type="entry name" value="Mur_ligase"/>
    <property type="match status" value="1"/>
</dbReference>
<dbReference type="Pfam" id="PF02875">
    <property type="entry name" value="Mur_ligase_C"/>
    <property type="match status" value="1"/>
</dbReference>
<dbReference type="Pfam" id="PF08245">
    <property type="entry name" value="Mur_ligase_M"/>
    <property type="match status" value="1"/>
</dbReference>
<dbReference type="SUPFAM" id="SSF51984">
    <property type="entry name" value="MurCD N-terminal domain"/>
    <property type="match status" value="1"/>
</dbReference>
<dbReference type="SUPFAM" id="SSF53623">
    <property type="entry name" value="MurD-like peptide ligases, catalytic domain"/>
    <property type="match status" value="1"/>
</dbReference>
<dbReference type="SUPFAM" id="SSF53244">
    <property type="entry name" value="MurD-like peptide ligases, peptide-binding domain"/>
    <property type="match status" value="1"/>
</dbReference>
<protein>
    <recommendedName>
        <fullName evidence="1">UDP-N-acetylmuramate--L-alanine ligase</fullName>
        <ecNumber evidence="1">6.3.2.8</ecNumber>
    </recommendedName>
    <alternativeName>
        <fullName evidence="1">UDP-N-acetylmuramoyl-L-alanine synthetase</fullName>
    </alternativeName>
</protein>
<proteinExistence type="inferred from homology"/>
<accession>Q8DLV5</accession>
<gene>
    <name evidence="1" type="primary">murC</name>
    <name type="ordered locus">tll0371</name>
</gene>
<comment type="function">
    <text evidence="1">Cell wall formation.</text>
</comment>
<comment type="catalytic activity">
    <reaction evidence="1">
        <text>UDP-N-acetyl-alpha-D-muramate + L-alanine + ATP = UDP-N-acetyl-alpha-D-muramoyl-L-alanine + ADP + phosphate + H(+)</text>
        <dbReference type="Rhea" id="RHEA:23372"/>
        <dbReference type="ChEBI" id="CHEBI:15378"/>
        <dbReference type="ChEBI" id="CHEBI:30616"/>
        <dbReference type="ChEBI" id="CHEBI:43474"/>
        <dbReference type="ChEBI" id="CHEBI:57972"/>
        <dbReference type="ChEBI" id="CHEBI:70757"/>
        <dbReference type="ChEBI" id="CHEBI:83898"/>
        <dbReference type="ChEBI" id="CHEBI:456216"/>
        <dbReference type="EC" id="6.3.2.8"/>
    </reaction>
</comment>
<comment type="pathway">
    <text evidence="1">Cell wall biogenesis; peptidoglycan biosynthesis.</text>
</comment>
<comment type="subcellular location">
    <subcellularLocation>
        <location evidence="1">Cytoplasm</location>
    </subcellularLocation>
</comment>
<comment type="similarity">
    <text evidence="1">Belongs to the MurCDEF family.</text>
</comment>
<keyword id="KW-0067">ATP-binding</keyword>
<keyword id="KW-0131">Cell cycle</keyword>
<keyword id="KW-0132">Cell division</keyword>
<keyword id="KW-0133">Cell shape</keyword>
<keyword id="KW-0961">Cell wall biogenesis/degradation</keyword>
<keyword id="KW-0963">Cytoplasm</keyword>
<keyword id="KW-0436">Ligase</keyword>
<keyword id="KW-0547">Nucleotide-binding</keyword>
<keyword id="KW-0573">Peptidoglycan synthesis</keyword>
<keyword id="KW-1185">Reference proteome</keyword>
<organism>
    <name type="scientific">Thermosynechococcus vestitus (strain NIES-2133 / IAM M-273 / BP-1)</name>
    <dbReference type="NCBI Taxonomy" id="197221"/>
    <lineage>
        <taxon>Bacteria</taxon>
        <taxon>Bacillati</taxon>
        <taxon>Cyanobacteriota</taxon>
        <taxon>Cyanophyceae</taxon>
        <taxon>Acaryochloridales</taxon>
        <taxon>Thermosynechococcaceae</taxon>
        <taxon>Thermosynechococcus</taxon>
    </lineage>
</organism>
<feature type="chain" id="PRO_0000182173" description="UDP-N-acetylmuramate--L-alanine ligase">
    <location>
        <begin position="1"/>
        <end position="475"/>
    </location>
</feature>
<feature type="binding site" evidence="1">
    <location>
        <begin position="118"/>
        <end position="124"/>
    </location>
    <ligand>
        <name>ATP</name>
        <dbReference type="ChEBI" id="CHEBI:30616"/>
    </ligand>
</feature>
<name>MURC_THEVB</name>